<keyword id="KW-0025">Alternative splicing</keyword>
<keyword id="KW-0963">Cytoplasm</keyword>
<keyword id="KW-0238">DNA-binding</keyword>
<keyword id="KW-0269">Exonuclease</keyword>
<keyword id="KW-0378">Hydrolase</keyword>
<keyword id="KW-0540">Nuclease</keyword>
<keyword id="KW-0597">Phosphoprotein</keyword>
<keyword id="KW-1267">Proteomics identification</keyword>
<keyword id="KW-1185">Reference proteome</keyword>
<keyword id="KW-0694">RNA-binding</keyword>
<keyword id="KW-0043">Tumor suppressor</keyword>
<dbReference type="EC" id="3.1.13.-"/>
<dbReference type="EMBL" id="AY137776">
    <property type="protein sequence ID" value="AAN11306.1"/>
    <property type="molecule type" value="mRNA"/>
</dbReference>
<dbReference type="EMBL" id="AL133623">
    <property type="protein sequence ID" value="CAB63749.1"/>
    <property type="molecule type" value="mRNA"/>
</dbReference>
<dbReference type="EMBL" id="BX640905">
    <property type="protein sequence ID" value="CAE45950.1"/>
    <property type="molecule type" value="mRNA"/>
</dbReference>
<dbReference type="EMBL" id="CR627396">
    <property type="protein sequence ID" value="CAH10490.1"/>
    <property type="molecule type" value="mRNA"/>
</dbReference>
<dbReference type="EMBL" id="CR749518">
    <property type="protein sequence ID" value="CAH18332.1"/>
    <property type="molecule type" value="mRNA"/>
</dbReference>
<dbReference type="EMBL" id="BC039314">
    <property type="protein sequence ID" value="AAH39314.1"/>
    <property type="molecule type" value="mRNA"/>
</dbReference>
<dbReference type="EMBL" id="BC048104">
    <property type="protein sequence ID" value="AAH48104.1"/>
    <property type="molecule type" value="mRNA"/>
</dbReference>
<dbReference type="EMBL" id="AK096177">
    <property type="protein sequence ID" value="BAC04718.1"/>
    <property type="molecule type" value="mRNA"/>
</dbReference>
<dbReference type="CCDS" id="CCDS3123.1">
    <molecule id="Q8IZH2-1"/>
</dbReference>
<dbReference type="CCDS" id="CCDS63801.1">
    <molecule id="Q8IZH2-2"/>
</dbReference>
<dbReference type="CCDS" id="CCDS75028.1">
    <molecule id="Q8IZH2-3"/>
</dbReference>
<dbReference type="PIR" id="T43461">
    <property type="entry name" value="T43461"/>
</dbReference>
<dbReference type="RefSeq" id="NP_001269786.1">
    <molecule id="Q8IZH2-2"/>
    <property type="nucleotide sequence ID" value="NM_001282857.2"/>
</dbReference>
<dbReference type="RefSeq" id="NP_001269788.1">
    <molecule id="Q8IZH2-3"/>
    <property type="nucleotide sequence ID" value="NM_001282859.2"/>
</dbReference>
<dbReference type="RefSeq" id="NP_061874.3">
    <molecule id="Q8IZH2-1"/>
    <property type="nucleotide sequence ID" value="NM_019001.4"/>
</dbReference>
<dbReference type="SMR" id="Q8IZH2"/>
<dbReference type="BioGRID" id="119970">
    <property type="interactions" value="284"/>
</dbReference>
<dbReference type="ComplexPortal" id="CPX-2870">
    <property type="entry name" value="RNA decapping and exonuclease complex, DCP1A variant"/>
</dbReference>
<dbReference type="ComplexPortal" id="CPX-7341">
    <property type="entry name" value="RNA decapping and exonuclease complex, DCP1B variant"/>
</dbReference>
<dbReference type="CORUM" id="Q8IZH2"/>
<dbReference type="DIP" id="DIP-31174N"/>
<dbReference type="FunCoup" id="Q8IZH2">
    <property type="interactions" value="3758"/>
</dbReference>
<dbReference type="IntAct" id="Q8IZH2">
    <property type="interactions" value="120"/>
</dbReference>
<dbReference type="MINT" id="Q8IZH2"/>
<dbReference type="STRING" id="9606.ENSP00000264951"/>
<dbReference type="MoonDB" id="Q8IZH2">
    <property type="type" value="Predicted"/>
</dbReference>
<dbReference type="GlyCosmos" id="Q8IZH2">
    <property type="glycosylation" value="2 sites, 1 glycan"/>
</dbReference>
<dbReference type="GlyGen" id="Q8IZH2">
    <property type="glycosylation" value="4 sites, 1 O-linked glycan (4 sites)"/>
</dbReference>
<dbReference type="iPTMnet" id="Q8IZH2"/>
<dbReference type="PhosphoSitePlus" id="Q8IZH2"/>
<dbReference type="SwissPalm" id="Q8IZH2"/>
<dbReference type="BioMuta" id="XRN1"/>
<dbReference type="DMDM" id="74714582"/>
<dbReference type="jPOST" id="Q8IZH2"/>
<dbReference type="MassIVE" id="Q8IZH2"/>
<dbReference type="PaxDb" id="9606-ENSP00000264951"/>
<dbReference type="PeptideAtlas" id="Q8IZH2"/>
<dbReference type="ProteomicsDB" id="71350">
    <molecule id="Q8IZH2-1"/>
</dbReference>
<dbReference type="ProteomicsDB" id="71351">
    <molecule id="Q8IZH2-2"/>
</dbReference>
<dbReference type="ProteomicsDB" id="71352">
    <molecule id="Q8IZH2-3"/>
</dbReference>
<dbReference type="Pumba" id="Q8IZH2"/>
<dbReference type="Antibodypedia" id="33491">
    <property type="antibodies" value="101 antibodies from 25 providers"/>
</dbReference>
<dbReference type="DNASU" id="54464"/>
<dbReference type="Ensembl" id="ENST00000264951.8">
    <molecule id="Q8IZH2-1"/>
    <property type="protein sequence ID" value="ENSP00000264951.4"/>
    <property type="gene ID" value="ENSG00000114127.11"/>
</dbReference>
<dbReference type="Ensembl" id="ENST00000392981.7">
    <molecule id="Q8IZH2-2"/>
    <property type="protein sequence ID" value="ENSP00000376707.2"/>
    <property type="gene ID" value="ENSG00000114127.11"/>
</dbReference>
<dbReference type="Ensembl" id="ENST00000463916.5">
    <molecule id="Q8IZH2-3"/>
    <property type="protein sequence ID" value="ENSP00000418404.1"/>
    <property type="gene ID" value="ENSG00000114127.11"/>
</dbReference>
<dbReference type="GeneID" id="54464"/>
<dbReference type="KEGG" id="hsa:54464"/>
<dbReference type="MANE-Select" id="ENST00000392981.7">
    <molecule id="Q8IZH2-2"/>
    <property type="protein sequence ID" value="ENSP00000376707.2"/>
    <property type="RefSeq nucleotide sequence ID" value="NM_001282857.2"/>
    <property type="RefSeq protein sequence ID" value="NP_001269786.1"/>
</dbReference>
<dbReference type="UCSC" id="uc003eus.4">
    <molecule id="Q8IZH2-1"/>
    <property type="organism name" value="human"/>
</dbReference>
<dbReference type="AGR" id="HGNC:30654"/>
<dbReference type="CTD" id="54464"/>
<dbReference type="DisGeNET" id="54464"/>
<dbReference type="GeneCards" id="XRN1"/>
<dbReference type="HGNC" id="HGNC:30654">
    <property type="gene designation" value="XRN1"/>
</dbReference>
<dbReference type="HPA" id="ENSG00000114127">
    <property type="expression patterns" value="Low tissue specificity"/>
</dbReference>
<dbReference type="MIM" id="607994">
    <property type="type" value="gene"/>
</dbReference>
<dbReference type="neXtProt" id="NX_Q8IZH2"/>
<dbReference type="OpenTargets" id="ENSG00000114127"/>
<dbReference type="PharmGKB" id="PA134878471"/>
<dbReference type="VEuPathDB" id="HostDB:ENSG00000114127"/>
<dbReference type="eggNOG" id="KOG2045">
    <property type="taxonomic scope" value="Eukaryota"/>
</dbReference>
<dbReference type="GeneTree" id="ENSGT00670000098080"/>
<dbReference type="HOGENOM" id="CLU_001581_3_0_1"/>
<dbReference type="InParanoid" id="Q8IZH2"/>
<dbReference type="OMA" id="VASWPWF"/>
<dbReference type="OrthoDB" id="372487at2759"/>
<dbReference type="PAN-GO" id="Q8IZH2">
    <property type="GO annotations" value="5 GO annotations based on evolutionary models"/>
</dbReference>
<dbReference type="PhylomeDB" id="Q8IZH2"/>
<dbReference type="TreeFam" id="TF105757"/>
<dbReference type="PathwayCommons" id="Q8IZH2"/>
<dbReference type="Reactome" id="R-HSA-430039">
    <property type="pathway name" value="mRNA decay by 5' to 3' exoribonuclease"/>
</dbReference>
<dbReference type="Reactome" id="R-HSA-450385">
    <property type="pathway name" value="Butyrate Response Factor 1 (BRF1) binds and destabilizes mRNA"/>
</dbReference>
<dbReference type="Reactome" id="R-HSA-450513">
    <property type="pathway name" value="Tristetraprolin (TTP, ZFP36) binds and destabilizes mRNA"/>
</dbReference>
<dbReference type="SignaLink" id="Q8IZH2"/>
<dbReference type="BioGRID-ORCS" id="54464">
    <property type="hits" value="500 hits in 1183 CRISPR screens"/>
</dbReference>
<dbReference type="CD-CODE" id="232F8A39">
    <property type="entry name" value="P-body"/>
</dbReference>
<dbReference type="CD-CODE" id="DEE660B4">
    <property type="entry name" value="Stress granule"/>
</dbReference>
<dbReference type="ChiTaRS" id="XRN1">
    <property type="organism name" value="human"/>
</dbReference>
<dbReference type="GenomeRNAi" id="54464"/>
<dbReference type="Pharos" id="Q8IZH2">
    <property type="development level" value="Tbio"/>
</dbReference>
<dbReference type="PRO" id="PR:Q8IZH2"/>
<dbReference type="Proteomes" id="UP000005640">
    <property type="component" value="Chromosome 3"/>
</dbReference>
<dbReference type="RNAct" id="Q8IZH2">
    <property type="molecule type" value="protein"/>
</dbReference>
<dbReference type="Bgee" id="ENSG00000114127">
    <property type="expression patterns" value="Expressed in epithelial cell of pancreas and 189 other cell types or tissues"/>
</dbReference>
<dbReference type="ExpressionAtlas" id="Q8IZH2">
    <property type="expression patterns" value="baseline and differential"/>
</dbReference>
<dbReference type="GO" id="GO:0005829">
    <property type="term" value="C:cytosol"/>
    <property type="evidence" value="ECO:0000314"/>
    <property type="project" value="HPA"/>
</dbReference>
<dbReference type="GO" id="GO:0030425">
    <property type="term" value="C:dendrite"/>
    <property type="evidence" value="ECO:0007669"/>
    <property type="project" value="Ensembl"/>
</dbReference>
<dbReference type="GO" id="GO:0016020">
    <property type="term" value="C:membrane"/>
    <property type="evidence" value="ECO:0007005"/>
    <property type="project" value="UniProtKB"/>
</dbReference>
<dbReference type="GO" id="GO:0043025">
    <property type="term" value="C:neuronal cell body"/>
    <property type="evidence" value="ECO:0007669"/>
    <property type="project" value="Ensembl"/>
</dbReference>
<dbReference type="GO" id="GO:0005634">
    <property type="term" value="C:nucleus"/>
    <property type="evidence" value="ECO:0000318"/>
    <property type="project" value="GO_Central"/>
</dbReference>
<dbReference type="GO" id="GO:0000932">
    <property type="term" value="C:P-body"/>
    <property type="evidence" value="ECO:0007669"/>
    <property type="project" value="Ensembl"/>
</dbReference>
<dbReference type="GO" id="GO:0005886">
    <property type="term" value="C:plasma membrane"/>
    <property type="evidence" value="ECO:0000314"/>
    <property type="project" value="HPA"/>
</dbReference>
<dbReference type="GO" id="GO:0004534">
    <property type="term" value="F:5'-3' RNA exonuclease activity"/>
    <property type="evidence" value="ECO:0000315"/>
    <property type="project" value="BHF-UCL"/>
</dbReference>
<dbReference type="GO" id="GO:0051880">
    <property type="term" value="F:G-quadruplex DNA binding"/>
    <property type="evidence" value="ECO:0000250"/>
    <property type="project" value="BHF-UCL"/>
</dbReference>
<dbReference type="GO" id="GO:0002151">
    <property type="term" value="F:G-quadruplex RNA binding"/>
    <property type="evidence" value="ECO:0000250"/>
    <property type="project" value="BHF-UCL"/>
</dbReference>
<dbReference type="GO" id="GO:0003723">
    <property type="term" value="F:RNA binding"/>
    <property type="evidence" value="ECO:0007005"/>
    <property type="project" value="UniProtKB"/>
</dbReference>
<dbReference type="GO" id="GO:0070034">
    <property type="term" value="F:telomerase RNA binding"/>
    <property type="evidence" value="ECO:0000353"/>
    <property type="project" value="BHF-UCL"/>
</dbReference>
<dbReference type="GO" id="GO:0071409">
    <property type="term" value="P:cellular response to cycloheximide"/>
    <property type="evidence" value="ECO:0007669"/>
    <property type="project" value="Ensembl"/>
</dbReference>
<dbReference type="GO" id="GO:1905795">
    <property type="term" value="P:cellular response to puromycin"/>
    <property type="evidence" value="ECO:0007669"/>
    <property type="project" value="Ensembl"/>
</dbReference>
<dbReference type="GO" id="GO:0071044">
    <property type="term" value="P:histone mRNA catabolic process"/>
    <property type="evidence" value="ECO:0000315"/>
    <property type="project" value="UniProtKB"/>
</dbReference>
<dbReference type="GO" id="GO:0032211">
    <property type="term" value="P:negative regulation of telomere maintenance via telomerase"/>
    <property type="evidence" value="ECO:0000305"/>
    <property type="project" value="BHF-UCL"/>
</dbReference>
<dbReference type="GO" id="GO:0017148">
    <property type="term" value="P:negative regulation of translation"/>
    <property type="evidence" value="ECO:0007669"/>
    <property type="project" value="Ensembl"/>
</dbReference>
<dbReference type="GO" id="GO:0071028">
    <property type="term" value="P:nuclear mRNA surveillance"/>
    <property type="evidence" value="ECO:0000315"/>
    <property type="project" value="UniProtKB"/>
</dbReference>
<dbReference type="GO" id="GO:0000956">
    <property type="term" value="P:nuclear-transcribed mRNA catabolic process"/>
    <property type="evidence" value="ECO:0000315"/>
    <property type="project" value="UniProtKB"/>
</dbReference>
<dbReference type="GO" id="GO:0033574">
    <property type="term" value="P:response to testosterone"/>
    <property type="evidence" value="ECO:0007669"/>
    <property type="project" value="Ensembl"/>
</dbReference>
<dbReference type="GO" id="GO:0016075">
    <property type="term" value="P:rRNA catabolic process"/>
    <property type="evidence" value="ECO:0000315"/>
    <property type="project" value="UniProtKB"/>
</dbReference>
<dbReference type="CDD" id="cd18673">
    <property type="entry name" value="PIN_XRN1-2-like"/>
    <property type="match status" value="1"/>
</dbReference>
<dbReference type="FunFam" id="1.25.40.1050:FF:000001">
    <property type="entry name" value="5'-3' exoribonuclease 1"/>
    <property type="match status" value="1"/>
</dbReference>
<dbReference type="FunFam" id="2.170.260.40:FF:000001">
    <property type="entry name" value="5'-3' exoribonuclease 1"/>
    <property type="match status" value="1"/>
</dbReference>
<dbReference type="FunFam" id="2.30.30.750:FF:000001">
    <property type="entry name" value="5'-3' exoribonuclease 1"/>
    <property type="match status" value="1"/>
</dbReference>
<dbReference type="FunFam" id="3.40.50.12390:FF:000002">
    <property type="entry name" value="5'-3' exoribonuclease 1"/>
    <property type="match status" value="1"/>
</dbReference>
<dbReference type="Gene3D" id="1.25.40.1050">
    <property type="match status" value="1"/>
</dbReference>
<dbReference type="Gene3D" id="2.170.260.40">
    <property type="match status" value="1"/>
</dbReference>
<dbReference type="Gene3D" id="2.30.30.750">
    <property type="match status" value="1"/>
</dbReference>
<dbReference type="Gene3D" id="3.40.50.12390">
    <property type="match status" value="1"/>
</dbReference>
<dbReference type="InterPro" id="IPR027073">
    <property type="entry name" value="5_3_exoribonuclease"/>
</dbReference>
<dbReference type="InterPro" id="IPR016494">
    <property type="entry name" value="5_3_exoribonuclease_1"/>
</dbReference>
<dbReference type="InterPro" id="IPR041385">
    <property type="entry name" value="SH3_12"/>
</dbReference>
<dbReference type="InterPro" id="IPR040992">
    <property type="entry name" value="XRN1_D1"/>
</dbReference>
<dbReference type="InterPro" id="IPR047007">
    <property type="entry name" value="XRN1_D1_sf"/>
</dbReference>
<dbReference type="InterPro" id="IPR041106">
    <property type="entry name" value="XRN1_D2_D3"/>
</dbReference>
<dbReference type="InterPro" id="IPR041412">
    <property type="entry name" value="Xrn1_helical"/>
</dbReference>
<dbReference type="InterPro" id="IPR004859">
    <property type="entry name" value="Xrn1_N"/>
</dbReference>
<dbReference type="InterPro" id="IPR047008">
    <property type="entry name" value="XRN1_SH3_sf"/>
</dbReference>
<dbReference type="PANTHER" id="PTHR12341:SF7">
    <property type="entry name" value="5'-3' EXORIBONUCLEASE 1"/>
    <property type="match status" value="1"/>
</dbReference>
<dbReference type="PANTHER" id="PTHR12341">
    <property type="entry name" value="5'-&gt;3' EXORIBONUCLEASE"/>
    <property type="match status" value="1"/>
</dbReference>
<dbReference type="Pfam" id="PF18129">
    <property type="entry name" value="SH3_12"/>
    <property type="match status" value="1"/>
</dbReference>
<dbReference type="Pfam" id="PF18332">
    <property type="entry name" value="XRN1_D1"/>
    <property type="match status" value="1"/>
</dbReference>
<dbReference type="Pfam" id="PF18334">
    <property type="entry name" value="XRN1_D2_D3"/>
    <property type="match status" value="1"/>
</dbReference>
<dbReference type="Pfam" id="PF17846">
    <property type="entry name" value="XRN_M"/>
    <property type="match status" value="1"/>
</dbReference>
<dbReference type="Pfam" id="PF03159">
    <property type="entry name" value="XRN_N"/>
    <property type="match status" value="1"/>
</dbReference>
<dbReference type="PIRSF" id="PIRSF006743">
    <property type="entry name" value="Exonuclease_Xnr1"/>
    <property type="match status" value="1"/>
</dbReference>
<dbReference type="SUPFAM" id="SSF54768">
    <property type="entry name" value="dsRNA-binding domain-like"/>
    <property type="match status" value="1"/>
</dbReference>
<sequence length="1706" mass="194107">MGVPKFYRWISERYPCLSEVVKEHQIPEFDNLYLDMNGIIHQCSHPNDDDVHFRISDDKIFTDIFHYLEVLFRIIKPRKVFFMAVDGVAPRAKMNQQRGRRFRSAKEAEDKIKKAIEKGETLPTEARFDSNCITPGTEFMARLHEHLKYFVNMKISTDKSWQGVTIYFSGHETPGEGEHKIMEFIRSEKAKPDHDPNTRHCLYGLDADLIMLGLTSHEAHFSLLREEVRFGGKKTQRVCAPEETTFHLLHLSLMREYIDYEFSVLKEKITFKYDIERIIDDWILMGFLVGNDFIPHLPHLHINHDALPLLYGTYVTILPELGGYINESGHLNLPRFEKYLVKLSDFDREHFSEVFVDLKWFESKVGNKYLNEAAGVAAEEARNYKEKKKLKGQENSLCWTALDKNEGEMITSKDNLEDETEDDDLFETEFRQYKRTYYMTKMGVDVVSDDFLADQAACYVQAIQWILHYYYHGVQSWSWYYPYHYAPFLSDIHNISTLKIHFELGKPFKPFEQLLAVLPAASKNLLPACYQHLMTNEDSPIIEYYPPDFKTDLNGKQQEWEAVVLIPFIDEKRLLEAMETCNHSLKKEERKRNQHSECLMCWYDRDTEFIYPSPWPEKFPAIERCCTRYKIISLDAWRVDINKNKITRIDQKALYFCGFPTLKHIRHKFFLKKSGVQVFQQSSRGENMMLEILVDAESDELTVENVASSVLGKSVFVNWPHLEEARVVAVSDGETKFYLEEPPGTQKLYSGRTAPPSKVVHLGDKEQSNWAKEVQGISEHYLRRKGIIINETSAVVYAQLLTGRKYQINQNGEVRLEKQWSKQVVPFVYQTIVKDIRAFDSRFSNIKTLDDLFPLRSMVFMLGTPYYGCTGEVQDSGDVITEGRIRVIFSIPCEPNLDALIQNQHKYSIKYNPGYVLASRLGVSGYLVSRFTGSIFIGRGSRRNPHGDHKANVGLNLKFNKKNEEVPGYTKKVGSEWMYSSAAEQLLAEYLERAPELFSYIAKNSQEDVFYEDDIWPGENENGAEKVQEIITWLKGHPVSTLSRSSCDLQILDAAIVEKIEEEVEKCKQRKNNKKVRVTVKPHLLYRPLEQQHGVIPDRDAEFCLFDRVVNVRENFSVPVGLRGTIIGIKGANREADVLFEVLFDEEFPGGLTIRCSPGRGYRLPTSALVNLSHGSRSETGNQKLTAIVKPQPAVHQHSSSSSVSSGHLGALNHSPQSLFVPTQVPTKDDDEFCNIWQSLQGSGKMQYFQPTIQEKGAVLPQEISQVNQHHKSGFNDNSVKYQQRKHDPHRKFKEECKSPKAECWSQKMSNKQPNSGIENFLASLNISKENEVQSSHHGEPPSEEHLSPQSFAMGTRMLKEILKIDGSNTVDHKNEIKQIANEIPVSSNRRDEYGLPSQPKQNKKLASYMNKPHSANEYHNVQSMDNMCWPAPSQIPPVSTPVTELSRICSLVGMPQPDFSFLRMPQTMTVCQVKLSNGLLVHGPQCHSENEAKEKAALFALQQLGSLGMNFPLPSQVFANYPSAVPPGTIPPAFPPPTGWDHYGSNYALGAANIMPSSSHLFGSMPWGPSVPVPGKPFHHTLYSGTMPMAGGIPGGVHNQFIPLQVTKKRVANKKNFENKEAQSSQATPVQTSQPDSSNIVKVSPRESSSASLKSSPIAQPASSFQVETASQGHSISHHKSTPISSSRRKSRKLAVNFGVSKPSE</sequence>
<protein>
    <recommendedName>
        <fullName>5'-3' exoribonuclease 1</fullName>
        <ecNumber>3.1.13.-</ecNumber>
    </recommendedName>
    <alternativeName>
        <fullName>Strand-exchange protein 1 homolog</fullName>
    </alternativeName>
</protein>
<accession>Q8IZH2</accession>
<accession>Q4G0S3</accession>
<accession>Q68D88</accession>
<accession>Q6AI24</accession>
<accession>Q6MZS8</accession>
<accession>Q86WS7</accession>
<accession>Q8N8U4</accession>
<accession>Q9UF39</accession>
<feature type="chain" id="PRO_0000071392" description="5'-3' exoribonuclease 1">
    <location>
        <begin position="1"/>
        <end position="1706"/>
    </location>
</feature>
<feature type="region of interest" description="Disordered" evidence="2">
    <location>
        <begin position="1619"/>
        <end position="1706"/>
    </location>
</feature>
<feature type="compositionally biased region" description="Polar residues" evidence="2">
    <location>
        <begin position="1623"/>
        <end position="1642"/>
    </location>
</feature>
<feature type="compositionally biased region" description="Low complexity" evidence="2">
    <location>
        <begin position="1647"/>
        <end position="1657"/>
    </location>
</feature>
<feature type="compositionally biased region" description="Polar residues" evidence="2">
    <location>
        <begin position="1658"/>
        <end position="1676"/>
    </location>
</feature>
<feature type="compositionally biased region" description="Basic residues" evidence="2">
    <location>
        <begin position="1677"/>
        <end position="1694"/>
    </location>
</feature>
<feature type="modified residue" description="Phosphoserine" evidence="1">
    <location>
        <position position="1348"/>
    </location>
</feature>
<feature type="modified residue" description="Phosphoserine" evidence="19">
    <location>
        <position position="1645"/>
    </location>
</feature>
<feature type="splice variant" id="VSP_016692" description="In isoform 3." evidence="15">
    <original>DDFLADQAACY</original>
    <variation>EYVFANAFILK</variation>
    <location>
        <begin position="449"/>
        <end position="459"/>
    </location>
</feature>
<feature type="splice variant" id="VSP_016693" description="In isoform 3." evidence="15">
    <location>
        <begin position="460"/>
        <end position="1706"/>
    </location>
</feature>
<feature type="splice variant" id="VSP_016694" description="In isoform 2." evidence="16">
    <original>M</original>
    <variation>MK</variation>
    <location>
        <position position="1354"/>
    </location>
</feature>
<feature type="splice variant" id="VSP_016695" description="In isoform 2." evidence="16">
    <location>
        <begin position="1540"/>
        <end position="1552"/>
    </location>
</feature>
<feature type="sequence variant" id="VAR_053000" description="In dbSNP:rs35214510.">
    <original>S</original>
    <variation>G</variation>
    <location>
        <position position="674"/>
    </location>
</feature>
<feature type="sequence variant" id="VAR_053001" description="In dbSNP:rs35902661.">
    <original>V</original>
    <variation>A</variation>
    <location>
        <position position="1259"/>
    </location>
</feature>
<feature type="sequence conflict" description="In Ref. 2; CAE45950." evidence="17" ref="2">
    <original>D</original>
    <variation>G</variation>
    <location>
        <position position="48"/>
    </location>
</feature>
<feature type="sequence conflict" description="In Ref. 4; BAC04718." evidence="17" ref="4">
    <original>I</original>
    <variation>T</variation>
    <location>
        <position position="55"/>
    </location>
</feature>
<feature type="sequence conflict" description="In Ref. 2; CAH18332." evidence="17" ref="2">
    <original>K</original>
    <variation>E</variation>
    <location>
        <position position="113"/>
    </location>
</feature>
<feature type="sequence conflict" description="In Ref. 3; AAH48104." evidence="17" ref="3">
    <original>R</original>
    <variation>K</variation>
    <location>
        <position position="142"/>
    </location>
</feature>
<feature type="sequence conflict" description="In Ref. 2; CAH18332." evidence="17" ref="2">
    <original>K</original>
    <variation>E</variation>
    <location>
        <position position="148"/>
    </location>
</feature>
<feature type="sequence conflict" description="In Ref. 2; CAB63749." evidence="17" ref="2">
    <location>
        <position position="572"/>
    </location>
</feature>
<feature type="sequence conflict" description="In Ref. 2; CAE45950." evidence="17" ref="2">
    <original>L</original>
    <variation>I</variation>
    <location>
        <position position="722"/>
    </location>
</feature>
<feature type="sequence conflict" description="In Ref. 2; CAH18332." evidence="17" ref="2">
    <original>K</original>
    <variation>R</variation>
    <location>
        <position position="834"/>
    </location>
</feature>
<feature type="sequence conflict" description="In Ref. 2; CAH18332." evidence="17" ref="2">
    <original>Q</original>
    <variation>R</variation>
    <location>
        <position position="1250"/>
    </location>
</feature>
<feature type="sequence conflict" description="In Ref. 2; CAE45950." evidence="17" ref="2">
    <original>L</original>
    <variation>F</variation>
    <location>
        <position position="1463"/>
    </location>
</feature>
<feature type="sequence conflict" description="In Ref. 2; CAH18332." evidence="17" ref="2">
    <original>S</original>
    <variation>P</variation>
    <location>
        <position position="1686"/>
    </location>
</feature>
<reference key="1">
    <citation type="journal article" date="2003" name="Neuroscience">
        <title>Identification of human SEP1 as a glial cell line-derived neurotrophic factor-inducible protein and its expression in the nervous system.</title>
        <authorList>
            <person name="Shimoyama Y."/>
            <person name="Morikawa Y."/>
            <person name="Ichihara M."/>
            <person name="Kodama Y."/>
            <person name="Fukuda N."/>
            <person name="Hayashi H."/>
            <person name="Morinaga T."/>
            <person name="Iwashita T."/>
            <person name="Murakumo Y."/>
            <person name="Takahashi M."/>
        </authorList>
    </citation>
    <scope>NUCLEOTIDE SEQUENCE [MRNA] (ISOFORM 1)</scope>
    <scope>INDUCTION BY GDNF</scope>
    <scope>SUBCELLULAR LOCATION</scope>
    <source>
        <tissue>Neuroblastoma</tissue>
    </source>
</reference>
<reference key="2">
    <citation type="journal article" date="2007" name="BMC Genomics">
        <title>The full-ORF clone resource of the German cDNA consortium.</title>
        <authorList>
            <person name="Bechtel S."/>
            <person name="Rosenfelder H."/>
            <person name="Duda A."/>
            <person name="Schmidt C.P."/>
            <person name="Ernst U."/>
            <person name="Wellenreuther R."/>
            <person name="Mehrle A."/>
            <person name="Schuster C."/>
            <person name="Bahr A."/>
            <person name="Bloecker H."/>
            <person name="Heubner D."/>
            <person name="Hoerlein A."/>
            <person name="Michel G."/>
            <person name="Wedler H."/>
            <person name="Koehrer K."/>
            <person name="Ottenwaelder B."/>
            <person name="Poustka A."/>
            <person name="Wiemann S."/>
            <person name="Schupp I."/>
        </authorList>
    </citation>
    <scope>NUCLEOTIDE SEQUENCE [LARGE SCALE MRNA] (ISOFORMS 1 AND 2)</scope>
    <source>
        <tissue>Fetal kidney</tissue>
        <tissue>Small intestine</tissue>
        <tissue>Testis</tissue>
    </source>
</reference>
<reference key="3">
    <citation type="journal article" date="2004" name="Genome Res.">
        <title>The status, quality, and expansion of the NIH full-length cDNA project: the Mammalian Gene Collection (MGC).</title>
        <authorList>
            <consortium name="The MGC Project Team"/>
        </authorList>
    </citation>
    <scope>NUCLEOTIDE SEQUENCE [LARGE SCALE MRNA] (ISOFORM 3)</scope>
    <source>
        <tissue>Brain</tissue>
        <tissue>Testis</tissue>
    </source>
</reference>
<reference key="4">
    <citation type="journal article" date="2004" name="Nat. Genet.">
        <title>Complete sequencing and characterization of 21,243 full-length human cDNAs.</title>
        <authorList>
            <person name="Ota T."/>
            <person name="Suzuki Y."/>
            <person name="Nishikawa T."/>
            <person name="Otsuki T."/>
            <person name="Sugiyama T."/>
            <person name="Irie R."/>
            <person name="Wakamatsu A."/>
            <person name="Hayashi K."/>
            <person name="Sato H."/>
            <person name="Nagai K."/>
            <person name="Kimura K."/>
            <person name="Makita H."/>
            <person name="Sekine M."/>
            <person name="Obayashi M."/>
            <person name="Nishi T."/>
            <person name="Shibahara T."/>
            <person name="Tanaka T."/>
            <person name="Ishii S."/>
            <person name="Yamamoto J."/>
            <person name="Saito K."/>
            <person name="Kawai Y."/>
            <person name="Isono Y."/>
            <person name="Nakamura Y."/>
            <person name="Nagahari K."/>
            <person name="Murakami K."/>
            <person name="Yasuda T."/>
            <person name="Iwayanagi T."/>
            <person name="Wagatsuma M."/>
            <person name="Shiratori A."/>
            <person name="Sudo H."/>
            <person name="Hosoiri T."/>
            <person name="Kaku Y."/>
            <person name="Kodaira H."/>
            <person name="Kondo H."/>
            <person name="Sugawara M."/>
            <person name="Takahashi M."/>
            <person name="Kanda K."/>
            <person name="Yokoi T."/>
            <person name="Furuya T."/>
            <person name="Kikkawa E."/>
            <person name="Omura Y."/>
            <person name="Abe K."/>
            <person name="Kamihara K."/>
            <person name="Katsuta N."/>
            <person name="Sato K."/>
            <person name="Tanikawa M."/>
            <person name="Yamazaki M."/>
            <person name="Ninomiya K."/>
            <person name="Ishibashi T."/>
            <person name="Yamashita H."/>
            <person name="Murakawa K."/>
            <person name="Fujimori K."/>
            <person name="Tanai H."/>
            <person name="Kimata M."/>
            <person name="Watanabe M."/>
            <person name="Hiraoka S."/>
            <person name="Chiba Y."/>
            <person name="Ishida S."/>
            <person name="Ono Y."/>
            <person name="Takiguchi S."/>
            <person name="Watanabe S."/>
            <person name="Yosida M."/>
            <person name="Hotuta T."/>
            <person name="Kusano J."/>
            <person name="Kanehori K."/>
            <person name="Takahashi-Fujii A."/>
            <person name="Hara H."/>
            <person name="Tanase T.-O."/>
            <person name="Nomura Y."/>
            <person name="Togiya S."/>
            <person name="Komai F."/>
            <person name="Hara R."/>
            <person name="Takeuchi K."/>
            <person name="Arita M."/>
            <person name="Imose N."/>
            <person name="Musashino K."/>
            <person name="Yuuki H."/>
            <person name="Oshima A."/>
            <person name="Sasaki N."/>
            <person name="Aotsuka S."/>
            <person name="Yoshikawa Y."/>
            <person name="Matsunawa H."/>
            <person name="Ichihara T."/>
            <person name="Shiohata N."/>
            <person name="Sano S."/>
            <person name="Moriya S."/>
            <person name="Momiyama H."/>
            <person name="Satoh N."/>
            <person name="Takami S."/>
            <person name="Terashima Y."/>
            <person name="Suzuki O."/>
            <person name="Nakagawa S."/>
            <person name="Senoh A."/>
            <person name="Mizoguchi H."/>
            <person name="Goto Y."/>
            <person name="Shimizu F."/>
            <person name="Wakebe H."/>
            <person name="Hishigaki H."/>
            <person name="Watanabe T."/>
            <person name="Sugiyama A."/>
            <person name="Takemoto M."/>
            <person name="Kawakami B."/>
            <person name="Yamazaki M."/>
            <person name="Watanabe K."/>
            <person name="Kumagai A."/>
            <person name="Itakura S."/>
            <person name="Fukuzumi Y."/>
            <person name="Fujimori Y."/>
            <person name="Komiyama M."/>
            <person name="Tashiro H."/>
            <person name="Tanigami A."/>
            <person name="Fujiwara T."/>
            <person name="Ono T."/>
            <person name="Yamada K."/>
            <person name="Fujii Y."/>
            <person name="Ozaki K."/>
            <person name="Hirao M."/>
            <person name="Ohmori Y."/>
            <person name="Kawabata A."/>
            <person name="Hikiji T."/>
            <person name="Kobatake N."/>
            <person name="Inagaki H."/>
            <person name="Ikema Y."/>
            <person name="Okamoto S."/>
            <person name="Okitani R."/>
            <person name="Kawakami T."/>
            <person name="Noguchi S."/>
            <person name="Itoh T."/>
            <person name="Shigeta K."/>
            <person name="Senba T."/>
            <person name="Matsumura K."/>
            <person name="Nakajima Y."/>
            <person name="Mizuno T."/>
            <person name="Morinaga M."/>
            <person name="Sasaki M."/>
            <person name="Togashi T."/>
            <person name="Oyama M."/>
            <person name="Hata H."/>
            <person name="Watanabe M."/>
            <person name="Komatsu T."/>
            <person name="Mizushima-Sugano J."/>
            <person name="Satoh T."/>
            <person name="Shirai Y."/>
            <person name="Takahashi Y."/>
            <person name="Nakagawa K."/>
            <person name="Okumura K."/>
            <person name="Nagase T."/>
            <person name="Nomura N."/>
            <person name="Kikuchi H."/>
            <person name="Masuho Y."/>
            <person name="Yamashita R."/>
            <person name="Nakai K."/>
            <person name="Yada T."/>
            <person name="Nakamura Y."/>
            <person name="Ohara O."/>
            <person name="Isogai T."/>
            <person name="Sugano S."/>
        </authorList>
    </citation>
    <scope>NUCLEOTIDE SEQUENCE [LARGE SCALE MRNA] OF 1-473 (ISOFORMS 1/2)</scope>
    <source>
        <tissue>Mesangial cell</tissue>
    </source>
</reference>
<reference key="5">
    <citation type="journal article" date="1998" name="DNA Res.">
        <title>Cloning and characterization of human Sep1 (hSEP1) gene and cytoplasmic localization of its product.</title>
        <authorList>
            <person name="Sato Y."/>
            <person name="Shimamoto A."/>
            <person name="Shobuike T."/>
            <person name="Sugimoto M."/>
            <person name="Ikeda H."/>
            <person name="Kuroda S."/>
            <person name="Furuichi Y."/>
        </authorList>
    </citation>
    <scope>ALTERNATIVE SPLICING (ISOFORM 2)</scope>
    <scope>SUBCELLULAR LOCATION</scope>
</reference>
<reference key="6">
    <citation type="journal article" date="2003" name="Mol. Cell">
        <title>Nonsense-mediated mRNA decay in mammalian cells involves decapping, deadenylating, and exonucleolytic activities.</title>
        <authorList>
            <person name="Lejeune F."/>
            <person name="Li X."/>
            <person name="Maquat L.E."/>
        </authorList>
    </citation>
    <scope>IDENTIFICATION IN A MRNP COMPLEX WITH UPF1; UPF2 AND UPF3B</scope>
</reference>
<reference key="7">
    <citation type="journal article" date="2002" name="RNA">
        <title>The human LSm1-7 proteins colocalize with the mRNA-degrading enzymes Dcp1/2 and Xrnl in distinct cytoplasmic foci.</title>
        <authorList>
            <person name="Ingelfinger D."/>
            <person name="Arndt-Jovin D.J."/>
            <person name="Luehrmann R."/>
            <person name="Achsel T."/>
        </authorList>
    </citation>
    <scope>SUBCELLULAR LOCATION</scope>
</reference>
<reference key="8">
    <citation type="journal article" date="2002" name="Gene">
        <title>The human homolog of yeast SEP1 is a novel candidate tumor suppressor gene in osteogenic sarcoma.</title>
        <authorList>
            <person name="Zhang K."/>
            <person name="Dion N."/>
            <person name="Fuchs B."/>
            <person name="Damron T."/>
            <person name="Gitelis S."/>
            <person name="Irwin R."/>
            <person name="O'Connor M."/>
            <person name="Schwartz H."/>
            <person name="Scully S.P."/>
            <person name="Rock M.G."/>
            <person name="Bolander M.E."/>
            <person name="Sarkar G."/>
        </authorList>
    </citation>
    <scope>POTENTIAL TUMOR SUPPRESSION ROLE IN OSTEOGENIC SARCOMA</scope>
    <scope>TISSUE SPECIFICITY</scope>
</reference>
<reference key="9">
    <citation type="journal article" date="2005" name="Genes Dev.">
        <title>Recruitment and activation of mRNA decay enzymes by two ARE-mediated decay activation domains in the proteins TTP and BRF-1.</title>
        <authorList>
            <person name="Lykke-Andersen J."/>
            <person name="Wagner E."/>
        </authorList>
    </citation>
    <scope>INTERACTION WITH ZFP36L1</scope>
</reference>
<reference key="10">
    <citation type="journal article" date="2008" name="Genes Dev.">
        <title>Degradation of histone mRNA requires oligouridylation followed by decapping and simultaneous degradation of the mRNA both 5' to 3' and 3' to 5'.</title>
        <authorList>
            <person name="Mullen T.E."/>
            <person name="Marzluff W.F."/>
        </authorList>
    </citation>
    <scope>FUNCTION IN HISTONE MRNA DEGRADATION ACTIVITY</scope>
</reference>
<reference key="11">
    <citation type="journal article" date="2009" name="Sci. Signal.">
        <title>Quantitative phosphoproteomic analysis of T cell receptor signaling reveals system-wide modulation of protein-protein interactions.</title>
        <authorList>
            <person name="Mayya V."/>
            <person name="Lundgren D.H."/>
            <person name="Hwang S.-I."/>
            <person name="Rezaul K."/>
            <person name="Wu L."/>
            <person name="Eng J.K."/>
            <person name="Rodionov V."/>
            <person name="Han D.K."/>
        </authorList>
    </citation>
    <scope>IDENTIFICATION BY MASS SPECTROMETRY [LARGE SCALE ANALYSIS]</scope>
    <source>
        <tissue>Leukemic T-cell</tissue>
    </source>
</reference>
<reference key="12">
    <citation type="journal article" date="2011" name="BMC Syst. Biol.">
        <title>Initial characterization of the human central proteome.</title>
        <authorList>
            <person name="Burkard T.R."/>
            <person name="Planyavsky M."/>
            <person name="Kaupe I."/>
            <person name="Breitwieser F.P."/>
            <person name="Buerckstuemmer T."/>
            <person name="Bennett K.L."/>
            <person name="Superti-Furga G."/>
            <person name="Colinge J."/>
        </authorList>
    </citation>
    <scope>IDENTIFICATION BY MASS SPECTROMETRY [LARGE SCALE ANALYSIS]</scope>
</reference>
<reference key="13">
    <citation type="journal article" date="2011" name="Proc. Natl. Acad. Sci. U.S.A.">
        <title>Zinc-finger antiviral protein inhibits HIV-1 infection by selectively targeting multiply spliced viral mRNAs for degradation.</title>
        <authorList>
            <person name="Zhu Y."/>
            <person name="Chen G."/>
            <person name="Lv F."/>
            <person name="Wang X."/>
            <person name="Ji X."/>
            <person name="Xu Y."/>
            <person name="Sun J."/>
            <person name="Wu L."/>
            <person name="Zheng Y.T."/>
            <person name="Gao G."/>
        </authorList>
    </citation>
    <scope>INTERACTION WITH ZC3HAV1</scope>
</reference>
<reference key="14">
    <citation type="journal article" date="2013" name="EMBO J.">
        <title>Exonuclease hDIS3L2 specifies an exosome-independent 3'-5' degradation pathway of human cytoplasmic mRNA.</title>
        <authorList>
            <person name="Lubas M."/>
            <person name="Damgaard C.K."/>
            <person name="Tomecki R."/>
            <person name="Cysewski D."/>
            <person name="Jensen T.H."/>
            <person name="Dziembowski A."/>
        </authorList>
    </citation>
    <scope>INTERACTION WITH DIS3L2</scope>
</reference>
<reference key="15">
    <citation type="journal article" date="2013" name="J. Proteome Res.">
        <title>Toward a comprehensive characterization of a human cancer cell phosphoproteome.</title>
        <authorList>
            <person name="Zhou H."/>
            <person name="Di Palma S."/>
            <person name="Preisinger C."/>
            <person name="Peng M."/>
            <person name="Polat A.N."/>
            <person name="Heck A.J."/>
            <person name="Mohammed S."/>
        </authorList>
    </citation>
    <scope>PHOSPHORYLATION [LARGE SCALE ANALYSIS] AT SER-1645</scope>
    <scope>IDENTIFICATION BY MASS SPECTROMETRY [LARGE SCALE ANALYSIS]</scope>
    <source>
        <tissue>Cervix carcinoma</tissue>
        <tissue>Erythroleukemia</tissue>
    </source>
</reference>
<reference key="16">
    <citation type="journal article" date="2013" name="Nucleic Acids Res.">
        <title>The mammalian TRIM-NHL protein TRIM71/LIN-41 is a repressor of mRNA function.</title>
        <authorList>
            <person name="Loedige I."/>
            <person name="Gaidatzis D."/>
            <person name="Sack R."/>
            <person name="Meister G."/>
            <person name="Filipowicz W."/>
        </authorList>
    </citation>
    <scope>INTERACTION WITH TRIM71</scope>
</reference>
<reference key="17">
    <citation type="journal article" date="2014" name="Cell Rep.">
        <title>The RNA helicase DHX34 activates NMD by promoting a transition from the surveillance to the decay-inducing complex.</title>
        <authorList>
            <person name="Hug N."/>
            <person name="Caceres J.F."/>
        </authorList>
    </citation>
    <scope>INTERACTION WITH DHX34</scope>
</reference>
<reference key="18">
    <citation type="journal article" date="2014" name="J. Proteomics">
        <title>An enzyme assisted RP-RPLC approach for in-depth analysis of human liver phosphoproteome.</title>
        <authorList>
            <person name="Bian Y."/>
            <person name="Song C."/>
            <person name="Cheng K."/>
            <person name="Dong M."/>
            <person name="Wang F."/>
            <person name="Huang J."/>
            <person name="Sun D."/>
            <person name="Wang L."/>
            <person name="Ye M."/>
            <person name="Zou H."/>
        </authorList>
    </citation>
    <scope>IDENTIFICATION BY MASS SPECTROMETRY [LARGE SCALE ANALYSIS]</scope>
    <source>
        <tissue>Liver</tissue>
    </source>
</reference>
<reference key="19">
    <citation type="journal article" date="2017" name="Mol. Cell">
        <title>Regulation of m6A transcripts by the 3'-5' RNA helicase YTHDC2 is essential for a successful meiotic program in the mammalian germline.</title>
        <authorList>
            <person name="Wojtas M.N."/>
            <person name="Pandey R.R."/>
            <person name="Mendel M."/>
            <person name="Homolka D."/>
            <person name="Sachidanandam R."/>
            <person name="Pillai R.S."/>
        </authorList>
    </citation>
    <scope>INTERACTION WITH YTHDC2</scope>
</reference>
<proteinExistence type="evidence at protein level"/>
<name>XRN1_HUMAN</name>
<gene>
    <name evidence="18" type="primary">XRN1</name>
    <name evidence="18" type="synonym">SEP1</name>
</gene>
<evidence type="ECO:0000250" key="1">
    <source>
        <dbReference type="UniProtKB" id="P97789"/>
    </source>
</evidence>
<evidence type="ECO:0000256" key="2">
    <source>
        <dbReference type="SAM" id="MobiDB-lite"/>
    </source>
</evidence>
<evidence type="ECO:0000269" key="3">
    <source>
    </source>
</evidence>
<evidence type="ECO:0000269" key="4">
    <source>
    </source>
</evidence>
<evidence type="ECO:0000269" key="5">
    <source>
    </source>
</evidence>
<evidence type="ECO:0000269" key="6">
    <source>
    </source>
</evidence>
<evidence type="ECO:0000269" key="7">
    <source>
    </source>
</evidence>
<evidence type="ECO:0000269" key="8">
    <source>
    </source>
</evidence>
<evidence type="ECO:0000269" key="9">
    <source>
    </source>
</evidence>
<evidence type="ECO:0000269" key="10">
    <source>
    </source>
</evidence>
<evidence type="ECO:0000269" key="11">
    <source>
    </source>
</evidence>
<evidence type="ECO:0000269" key="12">
    <source>
    </source>
</evidence>
<evidence type="ECO:0000269" key="13">
    <source>
    </source>
</evidence>
<evidence type="ECO:0000269" key="14">
    <source>
    </source>
</evidence>
<evidence type="ECO:0000303" key="15">
    <source>
    </source>
</evidence>
<evidence type="ECO:0000303" key="16">
    <source>
    </source>
</evidence>
<evidence type="ECO:0000305" key="17"/>
<evidence type="ECO:0000312" key="18">
    <source>
        <dbReference type="HGNC" id="HGNC:30654"/>
    </source>
</evidence>
<evidence type="ECO:0007744" key="19">
    <source>
    </source>
</evidence>
<comment type="function">
    <text evidence="1 8">Major 5'-3' exoribonuclease involved in mRNA decay. Required for the 5'-3'-processing of the G4 tetraplex-containing DNA and RNA substrates. The kinetic of hydrolysis is faster for G4 RNA tetraplex than for G4 DNA tetraplex and monomeric RNA tetraplex. Binds to RNA and DNA (By similarity). Plays a role in replication-dependent histone mRNA degradation. May act as a tumor suppressor protein in osteogenic sarcoma (OGS).</text>
</comment>
<comment type="subunit">
    <text evidence="1 5 7 9 10 11 12 13">Found in a mRNP complex with UPF1, UPF2, UPF3B and XRN1 (PubMed:14527413). Associates with alpha and beta tubulins (By similarity). Interacts with DIS3L2 (PubMed:23756462). Interacts with ZC3HAV1 in an RNA-dependent manner (PubMed:21876179). Interacts with ZFP36L1 (PubMed:15687258). Interacts with TRIM71 (via NHL repeats) in an RNA-dependent manner (PubMed:23125361). Interacts with YTHDC2 (via ANK repeats) (PubMed:29033321). Interacts with DHX34; the interaction is RNA-independent (PubMed:25220460).</text>
</comment>
<comment type="interaction">
    <interactant intactId="EBI-372406">
        <id>Q8IZH2</id>
    </interactant>
    <interactant intactId="EBI-1006038">
        <id>Q6P2E9</id>
        <label>EDC4</label>
    </interactant>
    <organismsDiffer>false</organismsDiffer>
    <experiments>5</experiments>
</comment>
<comment type="subcellular location">
    <subcellularLocation>
        <location evidence="4 6 14">Cytoplasm</location>
    </subcellularLocation>
    <text>Discrete foci at the inner surface of the cell membrane.</text>
</comment>
<comment type="alternative products">
    <event type="alternative splicing"/>
    <isoform>
        <id>Q8IZH2-1</id>
        <name>1</name>
        <sequence type="displayed"/>
    </isoform>
    <isoform>
        <id>Q8IZH2-2</id>
        <name>2</name>
        <sequence type="described" ref="VSP_016694 VSP_016695"/>
    </isoform>
    <isoform>
        <id>Q8IZH2-3</id>
        <name>3</name>
        <sequence type="described" ref="VSP_016692 VSP_016693"/>
    </isoform>
</comment>
<comment type="tissue specificity">
    <text evidence="3">Expressed in heart, brain, pancreas, spleen, testis, osteogenic sarcoma (OGS) biopsy and primary cell lines.</text>
</comment>
<comment type="induction">
    <text evidence="6">By GDNF/glial cell line-derived neurotrophic factor.</text>
</comment>
<comment type="miscellaneous">
    <text>Down-regulated in OGS biopsy.</text>
</comment>
<comment type="similarity">
    <text evidence="17">Belongs to the 5'-3' exonuclease family.</text>
</comment>
<organism>
    <name type="scientific">Homo sapiens</name>
    <name type="common">Human</name>
    <dbReference type="NCBI Taxonomy" id="9606"/>
    <lineage>
        <taxon>Eukaryota</taxon>
        <taxon>Metazoa</taxon>
        <taxon>Chordata</taxon>
        <taxon>Craniata</taxon>
        <taxon>Vertebrata</taxon>
        <taxon>Euteleostomi</taxon>
        <taxon>Mammalia</taxon>
        <taxon>Eutheria</taxon>
        <taxon>Euarchontoglires</taxon>
        <taxon>Primates</taxon>
        <taxon>Haplorrhini</taxon>
        <taxon>Catarrhini</taxon>
        <taxon>Hominidae</taxon>
        <taxon>Homo</taxon>
    </lineage>
</organism>